<dbReference type="EC" id="2.7.11.1"/>
<dbReference type="EMBL" id="AP000417">
    <property type="protein sequence ID" value="BAB02557.1"/>
    <property type="molecule type" value="Genomic_DNA"/>
</dbReference>
<dbReference type="EMBL" id="CP002686">
    <property type="protein sequence ID" value="AEE76277.1"/>
    <property type="molecule type" value="Genomic_DNA"/>
</dbReference>
<dbReference type="PIR" id="T52400">
    <property type="entry name" value="T52400"/>
</dbReference>
<dbReference type="RefSeq" id="NP_188604.1">
    <property type="nucleotide sequence ID" value="NM_112860.1"/>
</dbReference>
<dbReference type="SMR" id="Q9LJM4"/>
<dbReference type="BioGRID" id="6840">
    <property type="interactions" value="13"/>
</dbReference>
<dbReference type="IntAct" id="Q9LJM4">
    <property type="interactions" value="15"/>
</dbReference>
<dbReference type="STRING" id="3702.Q9LJM4"/>
<dbReference type="GlyCosmos" id="Q9LJM4">
    <property type="glycosylation" value="12 sites, No reported glycans"/>
</dbReference>
<dbReference type="GlyGen" id="Q9LJM4">
    <property type="glycosylation" value="12 sites"/>
</dbReference>
<dbReference type="iPTMnet" id="Q9LJM4"/>
<dbReference type="PaxDb" id="3702-AT3G19700.1"/>
<dbReference type="ProteomicsDB" id="228876"/>
<dbReference type="EnsemblPlants" id="AT3G19700.1">
    <property type="protein sequence ID" value="AT3G19700.1"/>
    <property type="gene ID" value="AT3G19700"/>
</dbReference>
<dbReference type="GeneID" id="821507"/>
<dbReference type="Gramene" id="AT3G19700.1">
    <property type="protein sequence ID" value="AT3G19700.1"/>
    <property type="gene ID" value="AT3G19700"/>
</dbReference>
<dbReference type="KEGG" id="ath:AT3G19700"/>
<dbReference type="Araport" id="AT3G19700"/>
<dbReference type="TAIR" id="AT3G19700">
    <property type="gene designation" value="IKU2"/>
</dbReference>
<dbReference type="eggNOG" id="ENOG502QVPY">
    <property type="taxonomic scope" value="Eukaryota"/>
</dbReference>
<dbReference type="HOGENOM" id="CLU_000288_22_1_1"/>
<dbReference type="InParanoid" id="Q9LJM4"/>
<dbReference type="OMA" id="DIVMWVW"/>
<dbReference type="PhylomeDB" id="Q9LJM4"/>
<dbReference type="PRO" id="PR:Q9LJM4"/>
<dbReference type="Proteomes" id="UP000006548">
    <property type="component" value="Chromosome 3"/>
</dbReference>
<dbReference type="ExpressionAtlas" id="Q9LJM4">
    <property type="expression patterns" value="baseline and differential"/>
</dbReference>
<dbReference type="GO" id="GO:0016020">
    <property type="term" value="C:membrane"/>
    <property type="evidence" value="ECO:0007669"/>
    <property type="project" value="UniProtKB-SubCell"/>
</dbReference>
<dbReference type="GO" id="GO:0005524">
    <property type="term" value="F:ATP binding"/>
    <property type="evidence" value="ECO:0007669"/>
    <property type="project" value="UniProtKB-KW"/>
</dbReference>
<dbReference type="GO" id="GO:0106310">
    <property type="term" value="F:protein serine kinase activity"/>
    <property type="evidence" value="ECO:0007669"/>
    <property type="project" value="RHEA"/>
</dbReference>
<dbReference type="GO" id="GO:0004674">
    <property type="term" value="F:protein serine/threonine kinase activity"/>
    <property type="evidence" value="ECO:0007669"/>
    <property type="project" value="UniProtKB-KW"/>
</dbReference>
<dbReference type="GO" id="GO:0009960">
    <property type="term" value="P:endosperm development"/>
    <property type="evidence" value="ECO:0000315"/>
    <property type="project" value="TAIR"/>
</dbReference>
<dbReference type="CDD" id="cd14066">
    <property type="entry name" value="STKc_IRAK"/>
    <property type="match status" value="1"/>
</dbReference>
<dbReference type="FunFam" id="3.80.10.10:FF:000413">
    <property type="entry name" value="Inactive leucine-rich repeat receptor-like protein kinase"/>
    <property type="match status" value="1"/>
</dbReference>
<dbReference type="FunFam" id="3.80.10.10:FF:000828">
    <property type="entry name" value="Leucine-rich repeat receptor-like serine/threonine-protein kinase BAM1"/>
    <property type="match status" value="1"/>
</dbReference>
<dbReference type="FunFam" id="3.80.10.10:FF:000111">
    <property type="entry name" value="LRR receptor-like serine/threonine-protein kinase ERECTA"/>
    <property type="match status" value="1"/>
</dbReference>
<dbReference type="FunFam" id="3.80.10.10:FF:000905">
    <property type="entry name" value="Receptor-like protein kinase 7"/>
    <property type="match status" value="1"/>
</dbReference>
<dbReference type="FunFam" id="3.30.200.20:FF:000540">
    <property type="entry name" value="Receptor-like protein kinase HAIKU2"/>
    <property type="match status" value="1"/>
</dbReference>
<dbReference type="FunFam" id="1.10.510.10:FF:000569">
    <property type="entry name" value="Serine/threonine-protein kinase-like protein CCR4"/>
    <property type="match status" value="1"/>
</dbReference>
<dbReference type="Gene3D" id="3.30.200.20">
    <property type="entry name" value="Phosphorylase Kinase, domain 1"/>
    <property type="match status" value="1"/>
</dbReference>
<dbReference type="Gene3D" id="3.80.10.10">
    <property type="entry name" value="Ribonuclease Inhibitor"/>
    <property type="match status" value="3"/>
</dbReference>
<dbReference type="Gene3D" id="1.10.510.10">
    <property type="entry name" value="Transferase(Phosphotransferase) domain 1"/>
    <property type="match status" value="1"/>
</dbReference>
<dbReference type="InterPro" id="IPR011009">
    <property type="entry name" value="Kinase-like_dom_sf"/>
</dbReference>
<dbReference type="InterPro" id="IPR001611">
    <property type="entry name" value="Leu-rich_rpt"/>
</dbReference>
<dbReference type="InterPro" id="IPR003591">
    <property type="entry name" value="Leu-rich_rpt_typical-subtyp"/>
</dbReference>
<dbReference type="InterPro" id="IPR032675">
    <property type="entry name" value="LRR_dom_sf"/>
</dbReference>
<dbReference type="InterPro" id="IPR013210">
    <property type="entry name" value="LRR_N_plant-typ"/>
</dbReference>
<dbReference type="InterPro" id="IPR055414">
    <property type="entry name" value="LRR_R13L4/SHOC2-like"/>
</dbReference>
<dbReference type="InterPro" id="IPR050647">
    <property type="entry name" value="Plant_LRR-RLKs"/>
</dbReference>
<dbReference type="InterPro" id="IPR000719">
    <property type="entry name" value="Prot_kinase_dom"/>
</dbReference>
<dbReference type="InterPro" id="IPR008271">
    <property type="entry name" value="Ser/Thr_kinase_AS"/>
</dbReference>
<dbReference type="PANTHER" id="PTHR48056">
    <property type="entry name" value="LRR RECEPTOR-LIKE SERINE/THREONINE-PROTEIN KINASE-RELATED"/>
    <property type="match status" value="1"/>
</dbReference>
<dbReference type="Pfam" id="PF00560">
    <property type="entry name" value="LRR_1"/>
    <property type="match status" value="3"/>
</dbReference>
<dbReference type="Pfam" id="PF23598">
    <property type="entry name" value="LRR_14"/>
    <property type="match status" value="1"/>
</dbReference>
<dbReference type="Pfam" id="PF13855">
    <property type="entry name" value="LRR_8"/>
    <property type="match status" value="2"/>
</dbReference>
<dbReference type="Pfam" id="PF08263">
    <property type="entry name" value="LRRNT_2"/>
    <property type="match status" value="1"/>
</dbReference>
<dbReference type="Pfam" id="PF00069">
    <property type="entry name" value="Pkinase"/>
    <property type="match status" value="1"/>
</dbReference>
<dbReference type="SMART" id="SM00369">
    <property type="entry name" value="LRR_TYP"/>
    <property type="match status" value="6"/>
</dbReference>
<dbReference type="SMART" id="SM00220">
    <property type="entry name" value="S_TKc"/>
    <property type="match status" value="1"/>
</dbReference>
<dbReference type="SUPFAM" id="SSF52058">
    <property type="entry name" value="L domain-like"/>
    <property type="match status" value="3"/>
</dbReference>
<dbReference type="SUPFAM" id="SSF56112">
    <property type="entry name" value="Protein kinase-like (PK-like)"/>
    <property type="match status" value="1"/>
</dbReference>
<dbReference type="PROSITE" id="PS50011">
    <property type="entry name" value="PROTEIN_KINASE_DOM"/>
    <property type="match status" value="1"/>
</dbReference>
<dbReference type="PROSITE" id="PS00108">
    <property type="entry name" value="PROTEIN_KINASE_ST"/>
    <property type="match status" value="1"/>
</dbReference>
<feature type="signal peptide" evidence="4">
    <location>
        <begin position="1"/>
        <end position="19"/>
    </location>
</feature>
<feature type="chain" id="PRO_0000240278" description="Receptor-like protein kinase HAIKU2">
    <location>
        <begin position="20"/>
        <end position="991"/>
    </location>
</feature>
<feature type="topological domain" description="Extracellular" evidence="4">
    <location>
        <begin position="20"/>
        <end position="616"/>
    </location>
</feature>
<feature type="transmembrane region" description="Helical" evidence="4">
    <location>
        <begin position="617"/>
        <end position="637"/>
    </location>
</feature>
<feature type="topological domain" description="Cytoplasmic" evidence="4">
    <location>
        <begin position="638"/>
        <end position="991"/>
    </location>
</feature>
<feature type="repeat" description="LRR 1">
    <location>
        <begin position="66"/>
        <end position="90"/>
    </location>
</feature>
<feature type="repeat" description="LRR 2">
    <location>
        <begin position="99"/>
        <end position="123"/>
    </location>
</feature>
<feature type="repeat" description="LRR 3">
    <location>
        <begin position="125"/>
        <end position="148"/>
    </location>
</feature>
<feature type="repeat" description="LRR 4">
    <location>
        <begin position="150"/>
        <end position="170"/>
    </location>
</feature>
<feature type="repeat" description="LRR 5">
    <location>
        <begin position="171"/>
        <end position="196"/>
    </location>
</feature>
<feature type="repeat" description="LRR 6">
    <location>
        <begin position="197"/>
        <end position="220"/>
    </location>
</feature>
<feature type="repeat" description="LRR 7">
    <location>
        <begin position="221"/>
        <end position="244"/>
    </location>
</feature>
<feature type="repeat" description="LRR 8">
    <location>
        <begin position="246"/>
        <end position="267"/>
    </location>
</feature>
<feature type="repeat" description="LRR 9">
    <location>
        <begin position="269"/>
        <end position="291"/>
    </location>
</feature>
<feature type="repeat" description="LRR 10">
    <location>
        <begin position="292"/>
        <end position="314"/>
    </location>
</feature>
<feature type="repeat" description="LRR 11">
    <location>
        <begin position="315"/>
        <end position="339"/>
    </location>
</feature>
<feature type="repeat" description="LRR 12">
    <location>
        <begin position="341"/>
        <end position="363"/>
    </location>
</feature>
<feature type="repeat" description="LRR 13">
    <location>
        <begin position="365"/>
        <end position="387"/>
    </location>
</feature>
<feature type="repeat" description="LRR 14">
    <location>
        <begin position="388"/>
        <end position="411"/>
    </location>
</feature>
<feature type="repeat" description="LRR 15">
    <location>
        <begin position="413"/>
        <end position="435"/>
    </location>
</feature>
<feature type="repeat" description="LRR 16">
    <location>
        <begin position="436"/>
        <end position="459"/>
    </location>
</feature>
<feature type="repeat" description="LRR 17">
    <location>
        <begin position="461"/>
        <end position="482"/>
    </location>
</feature>
<feature type="repeat" description="LRR 18">
    <location>
        <begin position="483"/>
        <end position="508"/>
    </location>
</feature>
<feature type="repeat" description="LRR 19">
    <location>
        <begin position="510"/>
        <end position="531"/>
    </location>
</feature>
<feature type="repeat" description="LRR 20">
    <location>
        <begin position="532"/>
        <end position="554"/>
    </location>
</feature>
<feature type="repeat" description="LRR 21">
    <location>
        <begin position="555"/>
        <end position="578"/>
    </location>
</feature>
<feature type="domain" description="Protein kinase" evidence="5">
    <location>
        <begin position="671"/>
        <end position="970"/>
    </location>
</feature>
<feature type="region of interest" description="Disordered" evidence="7">
    <location>
        <begin position="972"/>
        <end position="991"/>
    </location>
</feature>
<feature type="active site" description="Proton acceptor" evidence="5 6">
    <location>
        <position position="814"/>
    </location>
</feature>
<feature type="binding site" evidence="5">
    <location>
        <begin position="677"/>
        <end position="685"/>
    </location>
    <ligand>
        <name>ATP</name>
        <dbReference type="ChEBI" id="CHEBI:30616"/>
    </ligand>
</feature>
<feature type="binding site" evidence="5">
    <location>
        <position position="699"/>
    </location>
    <ligand>
        <name>ATP</name>
        <dbReference type="ChEBI" id="CHEBI:30616"/>
    </ligand>
</feature>
<feature type="modified residue" description="Phosphotyrosine" evidence="2">
    <location>
        <position position="762"/>
    </location>
</feature>
<feature type="modified residue" description="Phosphotyrosine" evidence="1">
    <location>
        <position position="801"/>
    </location>
</feature>
<feature type="modified residue" description="Phosphotyrosine" evidence="1">
    <location>
        <position position="859"/>
    </location>
</feature>
<feature type="modified residue" description="Phosphotyrosine" evidence="3">
    <location>
        <position position="866"/>
    </location>
</feature>
<feature type="modified residue" description="Phosphothreonine" evidence="3">
    <location>
        <position position="867"/>
    </location>
</feature>
<feature type="glycosylation site" description="N-linked (GlcNAc...) asparagine" evidence="4">
    <location>
        <position position="22"/>
    </location>
</feature>
<feature type="glycosylation site" description="N-linked (GlcNAc...) asparagine" evidence="4">
    <location>
        <position position="109"/>
    </location>
</feature>
<feature type="glycosylation site" description="N-linked (GlcNAc...) asparagine" evidence="4">
    <location>
        <position position="135"/>
    </location>
</feature>
<feature type="glycosylation site" description="N-linked (GlcNAc...) asparagine" evidence="4">
    <location>
        <position position="155"/>
    </location>
</feature>
<feature type="glycosylation site" description="N-linked (GlcNAc...) asparagine" evidence="4">
    <location>
        <position position="195"/>
    </location>
</feature>
<feature type="glycosylation site" description="N-linked (GlcNAc...) asparagine" evidence="4">
    <location>
        <position position="206"/>
    </location>
</feature>
<feature type="glycosylation site" description="N-linked (GlcNAc...) asparagine" evidence="4">
    <location>
        <position position="267"/>
    </location>
</feature>
<feature type="glycosylation site" description="N-linked (GlcNAc...) asparagine" evidence="4">
    <location>
        <position position="278"/>
    </location>
</feature>
<feature type="glycosylation site" description="N-linked (GlcNAc...) asparagine" evidence="4">
    <location>
        <position position="397"/>
    </location>
</feature>
<feature type="glycosylation site" description="N-linked (GlcNAc...) asparagine" evidence="4">
    <location>
        <position position="427"/>
    </location>
</feature>
<feature type="glycosylation site" description="N-linked (GlcNAc...) asparagine" evidence="4">
    <location>
        <position position="495"/>
    </location>
</feature>
<feature type="glycosylation site" description="N-linked (GlcNAc...) asparagine" evidence="4">
    <location>
        <position position="538"/>
    </location>
</feature>
<feature type="mutagenesis site" description="In iku2-3; reduced seed size and earlier endosperm cellularization." evidence="9">
    <original>R</original>
    <variation>K</variation>
    <location>
        <position position="953"/>
    </location>
</feature>
<gene>
    <name type="primary">IKU2</name>
    <name type="ordered locus">At3g19700</name>
    <name type="ORF">MMB12.19</name>
</gene>
<organism>
    <name type="scientific">Arabidopsis thaliana</name>
    <name type="common">Mouse-ear cress</name>
    <dbReference type="NCBI Taxonomy" id="3702"/>
    <lineage>
        <taxon>Eukaryota</taxon>
        <taxon>Viridiplantae</taxon>
        <taxon>Streptophyta</taxon>
        <taxon>Embryophyta</taxon>
        <taxon>Tracheophyta</taxon>
        <taxon>Spermatophyta</taxon>
        <taxon>Magnoliopsida</taxon>
        <taxon>eudicotyledons</taxon>
        <taxon>Gunneridae</taxon>
        <taxon>Pentapetalae</taxon>
        <taxon>rosids</taxon>
        <taxon>malvids</taxon>
        <taxon>Brassicales</taxon>
        <taxon>Brassicaceae</taxon>
        <taxon>Camelineae</taxon>
        <taxon>Arabidopsis</taxon>
    </lineage>
</organism>
<keyword id="KW-0067">ATP-binding</keyword>
<keyword id="KW-0325">Glycoprotein</keyword>
<keyword id="KW-0418">Kinase</keyword>
<keyword id="KW-0433">Leucine-rich repeat</keyword>
<keyword id="KW-0472">Membrane</keyword>
<keyword id="KW-0547">Nucleotide-binding</keyword>
<keyword id="KW-0597">Phosphoprotein</keyword>
<keyword id="KW-0675">Receptor</keyword>
<keyword id="KW-1185">Reference proteome</keyword>
<keyword id="KW-0677">Repeat</keyword>
<keyword id="KW-0723">Serine/threonine-protein kinase</keyword>
<keyword id="KW-0732">Signal</keyword>
<keyword id="KW-0808">Transferase</keyword>
<keyword id="KW-0812">Transmembrane</keyword>
<keyword id="KW-1133">Transmembrane helix</keyword>
<protein>
    <recommendedName>
        <fullName>Receptor-like protein kinase HAIKU2</fullName>
        <ecNumber>2.7.11.1</ecNumber>
    </recommendedName>
</protein>
<proteinExistence type="evidence at protein level"/>
<name>IKU2_ARATH</name>
<sequence>MLRLLFIVRLLFLMPLASSRSNHSEEVENLLKLKSTFGETKSDDVFKTWTHRNSACEFAGIVCNSDGNVVEINLGSRSLINRDDDGRFTDLPFDSICDLKLLEKLVLGNNSLRGQIGTNLGKCNRLRYLDLGINNFSGEFPAIDSLQLLEFLSLNASGISGIFPWSSLKDLKRLSFLSVGDNRFGSHPFPREILNLTALQWVYLSNSSITGKIPEGIKNLVRLQNLELSDNQISGEIPKEIVQLKNLRQLEIYSNDLTGKLPLGFRNLTNLRNFDASNNSLEGDLSELRFLKNLVSLGMFENRLTGEIPKEFGDFKSLAALSLYRNQLTGKLPRRLGSWTAFKYIDVSENFLEGQIPPYMCKKGVMTHLLMLQNRFTGQFPESYAKCKTLIRLRVSNNSLSGMIPSGIWGLPNLQFLDLASNYFEGNLTGDIGNAKSLGSLDLSNNRFSGSLPFQISGANSLVSVNLRMNKFSGIVPESFGKLKELSSLILDQNNLSGAIPKSLGLCTSLVDLNFAGNSLSEEIPESLGSLKLLNSLNLSGNKLSGMIPVGLSALKLSLLDLSNNQLTGSVPESLVSGSFEGNSGLCSSKIRYLRPCPLGKPHSQGKRKHLSKVDMCFIVAAILALFFLFSYVIFKIRRDKLNKTVQKKNDWQVSSFRLLNFNEMEIIDEIKSENIIGRGGQGNVYKVSLRSGETLAVKHIWCPESSHESFRSSTAMLSDGNNRSNNGEFEAEVATLSNIKHINVVKLFCSITCEDSKLLVYEYMPNGSLWEQLHERRGEQEIGWRVRQALALGAAKGLEYLHHGLDRPVIHRDVKSSNILLDEEWRPRIADFGLAKIIQADSVQRDFSAPLVKGTLGYIAPEYAYTTKVNEKSDVYSFGVVLMELVTGKKPLETDFGENNDIVMWVWSVSKETNREMMMKLIDTSIEDEYKEDALKVLTIALLCTDKSPQARPFMKSVVSMLEKIEPSYNKNSGEASYGESANDEITKVV</sequence>
<comment type="function">
    <text evidence="8 9">Modulates the seed size by negatively regulating the cellularization of syncytial endosperm.</text>
</comment>
<comment type="catalytic activity">
    <reaction>
        <text>L-seryl-[protein] + ATP = O-phospho-L-seryl-[protein] + ADP + H(+)</text>
        <dbReference type="Rhea" id="RHEA:17989"/>
        <dbReference type="Rhea" id="RHEA-COMP:9863"/>
        <dbReference type="Rhea" id="RHEA-COMP:11604"/>
        <dbReference type="ChEBI" id="CHEBI:15378"/>
        <dbReference type="ChEBI" id="CHEBI:29999"/>
        <dbReference type="ChEBI" id="CHEBI:30616"/>
        <dbReference type="ChEBI" id="CHEBI:83421"/>
        <dbReference type="ChEBI" id="CHEBI:456216"/>
        <dbReference type="EC" id="2.7.11.1"/>
    </reaction>
</comment>
<comment type="catalytic activity">
    <reaction>
        <text>L-threonyl-[protein] + ATP = O-phospho-L-threonyl-[protein] + ADP + H(+)</text>
        <dbReference type="Rhea" id="RHEA:46608"/>
        <dbReference type="Rhea" id="RHEA-COMP:11060"/>
        <dbReference type="Rhea" id="RHEA-COMP:11605"/>
        <dbReference type="ChEBI" id="CHEBI:15378"/>
        <dbReference type="ChEBI" id="CHEBI:30013"/>
        <dbReference type="ChEBI" id="CHEBI:30616"/>
        <dbReference type="ChEBI" id="CHEBI:61977"/>
        <dbReference type="ChEBI" id="CHEBI:456216"/>
        <dbReference type="EC" id="2.7.11.1"/>
    </reaction>
</comment>
<comment type="interaction">
    <interactant intactId="EBI-20664220">
        <id>Q9LJM4</id>
    </interactant>
    <interactant intactId="EBI-20654480">
        <id>C0LGR6</id>
        <label>At4g29180</label>
    </interactant>
    <organismsDiffer>false</organismsDiffer>
    <experiments>2</experiments>
</comment>
<comment type="interaction">
    <interactant intactId="EBI-20664220">
        <id>Q9LJM4</id>
    </interactant>
    <interactant intactId="EBI-1626936">
        <id>Q9LVI6</id>
        <label>RLK902</label>
    </interactant>
    <organismsDiffer>false</organismsDiffer>
    <experiments>2</experiments>
</comment>
<comment type="subcellular location">
    <subcellularLocation>
        <location evidence="10">Membrane</location>
        <topology evidence="10">Single-pass membrane protein</topology>
    </subcellularLocation>
</comment>
<comment type="tissue specificity">
    <text evidence="9">Expressed in the endosperm of fertilized ovules.</text>
</comment>
<comment type="similarity">
    <text evidence="5">Belongs to the protein kinase superfamily. Ser/Thr protein kinase family.</text>
</comment>
<reference key="1">
    <citation type="journal article" date="2000" name="DNA Res.">
        <title>Structural analysis of Arabidopsis thaliana chromosome 3. II. Sequence features of the 4,251,695 bp regions covered by 90 P1, TAC and BAC clones.</title>
        <authorList>
            <person name="Kaneko T."/>
            <person name="Katoh T."/>
            <person name="Sato S."/>
            <person name="Nakamura Y."/>
            <person name="Asamizu E."/>
            <person name="Tabata S."/>
        </authorList>
    </citation>
    <scope>NUCLEOTIDE SEQUENCE [LARGE SCALE GENOMIC DNA]</scope>
    <source>
        <strain>cv. Columbia</strain>
    </source>
</reference>
<reference key="2">
    <citation type="journal article" date="2017" name="Plant J.">
        <title>Araport11: a complete reannotation of the Arabidopsis thaliana reference genome.</title>
        <authorList>
            <person name="Cheng C.Y."/>
            <person name="Krishnakumar V."/>
            <person name="Chan A.P."/>
            <person name="Thibaud-Nissen F."/>
            <person name="Schobel S."/>
            <person name="Town C.D."/>
        </authorList>
    </citation>
    <scope>GENOME REANNOTATION</scope>
    <source>
        <strain>cv. Columbia</strain>
    </source>
</reference>
<reference key="3">
    <citation type="journal article" date="2003" name="Plant Physiol.">
        <title>Arabidopsis haiku mutants reveal new controls of seed size by endosperm.</title>
        <authorList>
            <person name="Garcia D."/>
            <person name="Saingery V."/>
            <person name="Chambrier P."/>
            <person name="Mayer U."/>
            <person name="Juergens G."/>
            <person name="Berger F."/>
        </authorList>
    </citation>
    <scope>FUNCTION</scope>
</reference>
<reference key="4">
    <citation type="journal article" date="2005" name="Proc. Natl. Acad. Sci. U.S.A.">
        <title>MINISEED3 (MINI3), a WRKY family gene, and HAIKU2 (IKU2), a leucine-rich repeat (LRR) KINASE gene, are regulators of seed size in Arabidopsis.</title>
        <authorList>
            <person name="Luo M."/>
            <person name="Dennis E.S."/>
            <person name="Berger F."/>
            <person name="Peacock W.J."/>
            <person name="Chaudhury A."/>
        </authorList>
    </citation>
    <scope>FUNCTION</scope>
    <scope>TISSUE SPECIFICITY</scope>
    <scope>MUTAGENESIS OF ARG-953</scope>
</reference>
<accession>Q9LJM4</accession>
<evidence type="ECO:0000250" key="1">
    <source>
        <dbReference type="UniProtKB" id="C0LGT6"/>
    </source>
</evidence>
<evidence type="ECO:0000250" key="2">
    <source>
        <dbReference type="UniProtKB" id="O22476"/>
    </source>
</evidence>
<evidence type="ECO:0000250" key="3">
    <source>
        <dbReference type="UniProtKB" id="Q9M0G7"/>
    </source>
</evidence>
<evidence type="ECO:0000255" key="4"/>
<evidence type="ECO:0000255" key="5">
    <source>
        <dbReference type="PROSITE-ProRule" id="PRU00159"/>
    </source>
</evidence>
<evidence type="ECO:0000255" key="6">
    <source>
        <dbReference type="PROSITE-ProRule" id="PRU10027"/>
    </source>
</evidence>
<evidence type="ECO:0000256" key="7">
    <source>
        <dbReference type="SAM" id="MobiDB-lite"/>
    </source>
</evidence>
<evidence type="ECO:0000269" key="8">
    <source>
    </source>
</evidence>
<evidence type="ECO:0000269" key="9">
    <source>
    </source>
</evidence>
<evidence type="ECO:0000305" key="10"/>